<dbReference type="EMBL" id="M19337">
    <property type="protein sequence ID" value="AAA33228.1"/>
    <property type="status" value="ALT_SEQ"/>
    <property type="molecule type" value="mRNA"/>
</dbReference>
<dbReference type="EMBL" id="X54161">
    <property type="protein sequence ID" value="CAA38100.1"/>
    <property type="molecule type" value="Genomic_DNA"/>
</dbReference>
<dbReference type="EMBL" id="AAFI02000023">
    <property type="protein sequence ID" value="EAL68102.1"/>
    <property type="molecule type" value="Genomic_DNA"/>
</dbReference>
<dbReference type="PIR" id="A28127">
    <property type="entry name" value="A28127"/>
</dbReference>
<dbReference type="RefSeq" id="XP_642037.1">
    <property type="nucleotide sequence ID" value="XM_636945.1"/>
</dbReference>
<dbReference type="SMR" id="P09402"/>
<dbReference type="STRING" id="44689.P09402"/>
<dbReference type="PaxDb" id="44689-DDB0214813"/>
<dbReference type="EnsemblProtists" id="EAL68102">
    <property type="protein sequence ID" value="EAL68102"/>
    <property type="gene ID" value="DDB_G0277859"/>
</dbReference>
<dbReference type="GeneID" id="8621248"/>
<dbReference type="KEGG" id="ddi:DDB_G0277859"/>
<dbReference type="dictyBase" id="DDB_G0277859">
    <property type="gene designation" value="mlcE"/>
</dbReference>
<dbReference type="VEuPathDB" id="AmoebaDB:DDB_G0277859"/>
<dbReference type="eggNOG" id="KOG0027">
    <property type="taxonomic scope" value="Eukaryota"/>
</dbReference>
<dbReference type="HOGENOM" id="CLU_061288_2_2_1"/>
<dbReference type="InParanoid" id="P09402"/>
<dbReference type="OMA" id="QECFSIF"/>
<dbReference type="PhylomeDB" id="P09402"/>
<dbReference type="Reactome" id="R-DDI-5627123">
    <property type="pathway name" value="RHO GTPases activate PAKs"/>
</dbReference>
<dbReference type="PRO" id="PR:P09402"/>
<dbReference type="Proteomes" id="UP000002195">
    <property type="component" value="Chromosome 3"/>
</dbReference>
<dbReference type="GO" id="GO:0042641">
    <property type="term" value="C:actomyosin"/>
    <property type="evidence" value="ECO:0000314"/>
    <property type="project" value="dictyBase"/>
</dbReference>
<dbReference type="GO" id="GO:0031012">
    <property type="term" value="C:extracellular matrix"/>
    <property type="evidence" value="ECO:0007005"/>
    <property type="project" value="dictyBase"/>
</dbReference>
<dbReference type="GO" id="GO:0016460">
    <property type="term" value="C:myosin II complex"/>
    <property type="evidence" value="ECO:0000314"/>
    <property type="project" value="dictyBase"/>
</dbReference>
<dbReference type="GO" id="GO:0005509">
    <property type="term" value="F:calcium ion binding"/>
    <property type="evidence" value="ECO:0007669"/>
    <property type="project" value="InterPro"/>
</dbReference>
<dbReference type="GO" id="GO:0140660">
    <property type="term" value="F:cytoskeletal motor activator activity"/>
    <property type="evidence" value="ECO:0000314"/>
    <property type="project" value="dictyBase"/>
</dbReference>
<dbReference type="GO" id="GO:0000146">
    <property type="term" value="F:microfilament motor activity"/>
    <property type="evidence" value="ECO:0000314"/>
    <property type="project" value="dictyBase"/>
</dbReference>
<dbReference type="GO" id="GO:0032036">
    <property type="term" value="F:myosin heavy chain binding"/>
    <property type="evidence" value="ECO:0000314"/>
    <property type="project" value="dictyBase"/>
</dbReference>
<dbReference type="GO" id="GO:0016477">
    <property type="term" value="P:cell migration"/>
    <property type="evidence" value="ECO:0000315"/>
    <property type="project" value="dictyBase"/>
</dbReference>
<dbReference type="GO" id="GO:0000281">
    <property type="term" value="P:mitotic cytokinesis"/>
    <property type="evidence" value="ECO:0000315"/>
    <property type="project" value="dictyBase"/>
</dbReference>
<dbReference type="GO" id="GO:0031034">
    <property type="term" value="P:myosin filament assembly"/>
    <property type="evidence" value="ECO:0000314"/>
    <property type="project" value="dictyBase"/>
</dbReference>
<dbReference type="GO" id="GO:0030587">
    <property type="term" value="P:sorocarp development"/>
    <property type="evidence" value="ECO:0000315"/>
    <property type="project" value="dictyBase"/>
</dbReference>
<dbReference type="CDD" id="cd00051">
    <property type="entry name" value="EFh"/>
    <property type="match status" value="2"/>
</dbReference>
<dbReference type="FunFam" id="1.10.238.10:FF:000001">
    <property type="entry name" value="Calmodulin 1"/>
    <property type="match status" value="1"/>
</dbReference>
<dbReference type="Gene3D" id="1.10.238.10">
    <property type="entry name" value="EF-hand"/>
    <property type="match status" value="2"/>
</dbReference>
<dbReference type="InterPro" id="IPR050230">
    <property type="entry name" value="CALM/Myosin/TropC-like"/>
</dbReference>
<dbReference type="InterPro" id="IPR011992">
    <property type="entry name" value="EF-hand-dom_pair"/>
</dbReference>
<dbReference type="InterPro" id="IPR018247">
    <property type="entry name" value="EF_Hand_1_Ca_BS"/>
</dbReference>
<dbReference type="InterPro" id="IPR002048">
    <property type="entry name" value="EF_hand_dom"/>
</dbReference>
<dbReference type="PANTHER" id="PTHR23048:SF0">
    <property type="entry name" value="CALMODULIN LIKE 3"/>
    <property type="match status" value="1"/>
</dbReference>
<dbReference type="PANTHER" id="PTHR23048">
    <property type="entry name" value="MYOSIN LIGHT CHAIN 1, 3"/>
    <property type="match status" value="1"/>
</dbReference>
<dbReference type="Pfam" id="PF13405">
    <property type="entry name" value="EF-hand_6"/>
    <property type="match status" value="1"/>
</dbReference>
<dbReference type="Pfam" id="PF13499">
    <property type="entry name" value="EF-hand_7"/>
    <property type="match status" value="1"/>
</dbReference>
<dbReference type="SMART" id="SM00054">
    <property type="entry name" value="EFh"/>
    <property type="match status" value="2"/>
</dbReference>
<dbReference type="SUPFAM" id="SSF47473">
    <property type="entry name" value="EF-hand"/>
    <property type="match status" value="1"/>
</dbReference>
<dbReference type="PROSITE" id="PS00018">
    <property type="entry name" value="EF_HAND_1"/>
    <property type="match status" value="1"/>
</dbReference>
<dbReference type="PROSITE" id="PS50222">
    <property type="entry name" value="EF_HAND_2"/>
    <property type="match status" value="2"/>
</dbReference>
<comment type="subunit">
    <text>Myosin is a hexamer of 2 heavy chains and 4 light chains (two regulatory light chains and two essential light chains).</text>
</comment>
<reference key="1">
    <citation type="journal article" date="1988" name="Mol. Cell. Biol.">
        <title>Dictyostelium discoideum myosin: isolation and characterization of cDNAs encoding the essential light chain.</title>
        <authorList>
            <person name="Chisholm R.L."/>
            <person name="Rushforth A.M."/>
            <person name="Pollenz R.S."/>
            <person name="Kuczmarski E.R."/>
            <person name="Tafuri S.R."/>
        </authorList>
    </citation>
    <scope>NUCLEOTIDE SEQUENCE [MRNA]</scope>
</reference>
<reference key="2">
    <citation type="journal article" date="1991" name="Cell Motil. Cytoskeleton">
        <title>Dictyostelium discoideum essential myosin light chain: gene structure and characterization.</title>
        <authorList>
            <person name="Pollenz R.S."/>
            <person name="Chisholm R.L."/>
        </authorList>
    </citation>
    <scope>NUCLEOTIDE SEQUENCE [GENOMIC DNA]</scope>
    <scope>SEQUENCE REVISION</scope>
    <source>
        <strain>AX3</strain>
    </source>
</reference>
<reference key="3">
    <citation type="journal article" date="2005" name="Nature">
        <title>The genome of the social amoeba Dictyostelium discoideum.</title>
        <authorList>
            <person name="Eichinger L."/>
            <person name="Pachebat J.A."/>
            <person name="Gloeckner G."/>
            <person name="Rajandream M.A."/>
            <person name="Sucgang R."/>
            <person name="Berriman M."/>
            <person name="Song J."/>
            <person name="Olsen R."/>
            <person name="Szafranski K."/>
            <person name="Xu Q."/>
            <person name="Tunggal B."/>
            <person name="Kummerfeld S."/>
            <person name="Madera M."/>
            <person name="Konfortov B.A."/>
            <person name="Rivero F."/>
            <person name="Bankier A.T."/>
            <person name="Lehmann R."/>
            <person name="Hamlin N."/>
            <person name="Davies R."/>
            <person name="Gaudet P."/>
            <person name="Fey P."/>
            <person name="Pilcher K."/>
            <person name="Chen G."/>
            <person name="Saunders D."/>
            <person name="Sodergren E.J."/>
            <person name="Davis P."/>
            <person name="Kerhornou A."/>
            <person name="Nie X."/>
            <person name="Hall N."/>
            <person name="Anjard C."/>
            <person name="Hemphill L."/>
            <person name="Bason N."/>
            <person name="Farbrother P."/>
            <person name="Desany B."/>
            <person name="Just E."/>
            <person name="Morio T."/>
            <person name="Rost R."/>
            <person name="Churcher C.M."/>
            <person name="Cooper J."/>
            <person name="Haydock S."/>
            <person name="van Driessche N."/>
            <person name="Cronin A."/>
            <person name="Goodhead I."/>
            <person name="Muzny D.M."/>
            <person name="Mourier T."/>
            <person name="Pain A."/>
            <person name="Lu M."/>
            <person name="Harper D."/>
            <person name="Lindsay R."/>
            <person name="Hauser H."/>
            <person name="James K.D."/>
            <person name="Quiles M."/>
            <person name="Madan Babu M."/>
            <person name="Saito T."/>
            <person name="Buchrieser C."/>
            <person name="Wardroper A."/>
            <person name="Felder M."/>
            <person name="Thangavelu M."/>
            <person name="Johnson D."/>
            <person name="Knights A."/>
            <person name="Loulseged H."/>
            <person name="Mungall K.L."/>
            <person name="Oliver K."/>
            <person name="Price C."/>
            <person name="Quail M.A."/>
            <person name="Urushihara H."/>
            <person name="Hernandez J."/>
            <person name="Rabbinowitsch E."/>
            <person name="Steffen D."/>
            <person name="Sanders M."/>
            <person name="Ma J."/>
            <person name="Kohara Y."/>
            <person name="Sharp S."/>
            <person name="Simmonds M.N."/>
            <person name="Spiegler S."/>
            <person name="Tivey A."/>
            <person name="Sugano S."/>
            <person name="White B."/>
            <person name="Walker D."/>
            <person name="Woodward J.R."/>
            <person name="Winckler T."/>
            <person name="Tanaka Y."/>
            <person name="Shaulsky G."/>
            <person name="Schleicher M."/>
            <person name="Weinstock G.M."/>
            <person name="Rosenthal A."/>
            <person name="Cox E.C."/>
            <person name="Chisholm R.L."/>
            <person name="Gibbs R.A."/>
            <person name="Loomis W.F."/>
            <person name="Platzer M."/>
            <person name="Kay R.R."/>
            <person name="Williams J.G."/>
            <person name="Dear P.H."/>
            <person name="Noegel A.A."/>
            <person name="Barrell B.G."/>
            <person name="Kuspa A."/>
        </authorList>
    </citation>
    <scope>NUCLEOTIDE SEQUENCE [LARGE SCALE GENOMIC DNA]</scope>
    <source>
        <strain>AX4</strain>
    </source>
</reference>
<proteinExistence type="evidence at transcript level"/>
<protein>
    <recommendedName>
        <fullName>Myosin, essential light chain</fullName>
    </recommendedName>
    <alternativeName>
        <fullName>EMLC</fullName>
    </alternativeName>
    <alternativeName>
        <fullName>Myosin light chain alkali</fullName>
    </alternativeName>
</protein>
<feature type="chain" id="PRO_0000198721" description="Myosin, essential light chain">
    <location>
        <begin position="1"/>
        <end position="150"/>
    </location>
</feature>
<feature type="domain" description="EF-hand 1" evidence="1">
    <location>
        <begin position="3"/>
        <end position="38"/>
    </location>
</feature>
<feature type="domain" description="EF-hand 2" evidence="1">
    <location>
        <begin position="75"/>
        <end position="110"/>
    </location>
</feature>
<feature type="binding site" evidence="1">
    <location>
        <position position="16"/>
    </location>
    <ligand>
        <name>Ca(2+)</name>
        <dbReference type="ChEBI" id="CHEBI:29108"/>
    </ligand>
</feature>
<feature type="binding site" evidence="1">
    <location>
        <position position="18"/>
    </location>
    <ligand>
        <name>Ca(2+)</name>
        <dbReference type="ChEBI" id="CHEBI:29108"/>
    </ligand>
</feature>
<feature type="binding site" evidence="1">
    <location>
        <position position="20"/>
    </location>
    <ligand>
        <name>Ca(2+)</name>
        <dbReference type="ChEBI" id="CHEBI:29108"/>
    </ligand>
</feature>
<feature type="binding site" evidence="1">
    <location>
        <position position="22"/>
    </location>
    <ligand>
        <name>Ca(2+)</name>
        <dbReference type="ChEBI" id="CHEBI:29108"/>
    </ligand>
</feature>
<feature type="binding site" evidence="1">
    <location>
        <position position="27"/>
    </location>
    <ligand>
        <name>Ca(2+)</name>
        <dbReference type="ChEBI" id="CHEBI:29108"/>
    </ligand>
</feature>
<keyword id="KW-0106">Calcium</keyword>
<keyword id="KW-0479">Metal-binding</keyword>
<keyword id="KW-0505">Motor protein</keyword>
<keyword id="KW-0518">Myosin</keyword>
<keyword id="KW-1185">Reference proteome</keyword>
<keyword id="KW-0677">Repeat</keyword>
<accession>P09402</accession>
<accession>Q54Z15</accession>
<evidence type="ECO:0000255" key="1">
    <source>
        <dbReference type="PROSITE-ProRule" id="PRU00448"/>
    </source>
</evidence>
<gene>
    <name type="primary">mlcE</name>
    <name type="synonym">mlcB</name>
    <name type="ORF">DDB_G0277859</name>
</gene>
<name>MLE_DICDI</name>
<sequence length="150" mass="16246">MSASADQIQECFSIFDKDNDGKVSVEDIGACLRSLGKSPTMADIEALKTEIGAKEFDINTLKSIYKKPNIKTPQEQQKEMLDAFKALDKEGHGTIQGAELRQLLTTLGDYLSTAEVDELFKEISVDSTTGAVSYASLVNTIVSGYPLGGF</sequence>
<organism>
    <name type="scientific">Dictyostelium discoideum</name>
    <name type="common">Social amoeba</name>
    <dbReference type="NCBI Taxonomy" id="44689"/>
    <lineage>
        <taxon>Eukaryota</taxon>
        <taxon>Amoebozoa</taxon>
        <taxon>Evosea</taxon>
        <taxon>Eumycetozoa</taxon>
        <taxon>Dictyostelia</taxon>
        <taxon>Dictyosteliales</taxon>
        <taxon>Dictyosteliaceae</taxon>
        <taxon>Dictyostelium</taxon>
    </lineage>
</organism>